<reference key="1">
    <citation type="submission" date="2007-05" db="EMBL/GenBank/DDBJ databases">
        <title>Complete sequence of Dehalococcoides sp. BAV1.</title>
        <authorList>
            <consortium name="US DOE Joint Genome Institute"/>
            <person name="Copeland A."/>
            <person name="Lucas S."/>
            <person name="Lapidus A."/>
            <person name="Barry K."/>
            <person name="Detter J.C."/>
            <person name="Glavina del Rio T."/>
            <person name="Hammon N."/>
            <person name="Israni S."/>
            <person name="Pitluck S."/>
            <person name="Lowry S."/>
            <person name="Clum A."/>
            <person name="Schmutz J."/>
            <person name="Larimer F."/>
            <person name="Land M."/>
            <person name="Hauser L."/>
            <person name="Kyrpides N."/>
            <person name="Kim E."/>
            <person name="Ritalahti K.M."/>
            <person name="Loeffler F."/>
            <person name="Richardson P."/>
        </authorList>
    </citation>
    <scope>NUCLEOTIDE SEQUENCE [LARGE SCALE GENOMIC DNA]</scope>
    <source>
        <strain>ATCC BAA-2100 / JCM 16839 / KCTC 5957 / BAV1</strain>
    </source>
</reference>
<proteinExistence type="inferred from homology"/>
<organism>
    <name type="scientific">Dehalococcoides mccartyi (strain ATCC BAA-2100 / JCM 16839 / KCTC 5957 / BAV1)</name>
    <dbReference type="NCBI Taxonomy" id="216389"/>
    <lineage>
        <taxon>Bacteria</taxon>
        <taxon>Bacillati</taxon>
        <taxon>Chloroflexota</taxon>
        <taxon>Dehalococcoidia</taxon>
        <taxon>Dehalococcoidales</taxon>
        <taxon>Dehalococcoidaceae</taxon>
        <taxon>Dehalococcoides</taxon>
    </lineage>
</organism>
<sequence length="103" mass="11496">MRLKKNDNVLVIAGKDKGKTGKVRYAYPRTDRVLVEGVNMIKRHSRAKGQAKQAGIIEREAPLHVSNLMLLCSKCNKPARIGSRELADGKSVRYCKSCNEVID</sequence>
<comment type="function">
    <text evidence="1">One of two assembly initiator proteins, it binds directly to the 5'-end of the 23S rRNA, where it nucleates assembly of the 50S subunit.</text>
</comment>
<comment type="function">
    <text evidence="1">One of the proteins that surrounds the polypeptide exit tunnel on the outside of the subunit.</text>
</comment>
<comment type="subunit">
    <text evidence="1">Part of the 50S ribosomal subunit.</text>
</comment>
<comment type="similarity">
    <text evidence="1">Belongs to the universal ribosomal protein uL24 family.</text>
</comment>
<protein>
    <recommendedName>
        <fullName evidence="1">Large ribosomal subunit protein uL24</fullName>
    </recommendedName>
    <alternativeName>
        <fullName evidence="2">50S ribosomal protein L24</fullName>
    </alternativeName>
</protein>
<name>RL24_DEHMB</name>
<accession>A5FRX2</accession>
<dbReference type="EMBL" id="CP000688">
    <property type="protein sequence ID" value="ABQ17047.1"/>
    <property type="molecule type" value="Genomic_DNA"/>
</dbReference>
<dbReference type="SMR" id="A5FRX2"/>
<dbReference type="KEGG" id="deb:DehaBAV1_0462"/>
<dbReference type="PATRIC" id="fig|216389.18.peg.505"/>
<dbReference type="HOGENOM" id="CLU_093315_2_3_0"/>
<dbReference type="GO" id="GO:1990904">
    <property type="term" value="C:ribonucleoprotein complex"/>
    <property type="evidence" value="ECO:0007669"/>
    <property type="project" value="UniProtKB-KW"/>
</dbReference>
<dbReference type="GO" id="GO:0005840">
    <property type="term" value="C:ribosome"/>
    <property type="evidence" value="ECO:0007669"/>
    <property type="project" value="UniProtKB-KW"/>
</dbReference>
<dbReference type="GO" id="GO:0019843">
    <property type="term" value="F:rRNA binding"/>
    <property type="evidence" value="ECO:0007669"/>
    <property type="project" value="UniProtKB-UniRule"/>
</dbReference>
<dbReference type="GO" id="GO:0003735">
    <property type="term" value="F:structural constituent of ribosome"/>
    <property type="evidence" value="ECO:0007669"/>
    <property type="project" value="InterPro"/>
</dbReference>
<dbReference type="GO" id="GO:0006412">
    <property type="term" value="P:translation"/>
    <property type="evidence" value="ECO:0007669"/>
    <property type="project" value="UniProtKB-UniRule"/>
</dbReference>
<dbReference type="CDD" id="cd06089">
    <property type="entry name" value="KOW_RPL26"/>
    <property type="match status" value="1"/>
</dbReference>
<dbReference type="FunFam" id="2.30.30.30:FF:000004">
    <property type="entry name" value="50S ribosomal protein L24"/>
    <property type="match status" value="1"/>
</dbReference>
<dbReference type="Gene3D" id="2.30.30.30">
    <property type="match status" value="1"/>
</dbReference>
<dbReference type="HAMAP" id="MF_01326_B">
    <property type="entry name" value="Ribosomal_uL24_B"/>
    <property type="match status" value="1"/>
</dbReference>
<dbReference type="InterPro" id="IPR005824">
    <property type="entry name" value="KOW"/>
</dbReference>
<dbReference type="InterPro" id="IPR014722">
    <property type="entry name" value="Rib_uL2_dom2"/>
</dbReference>
<dbReference type="InterPro" id="IPR003256">
    <property type="entry name" value="Ribosomal_uL24"/>
</dbReference>
<dbReference type="InterPro" id="IPR005825">
    <property type="entry name" value="Ribosomal_uL24_CS"/>
</dbReference>
<dbReference type="InterPro" id="IPR041988">
    <property type="entry name" value="Ribosomal_uL24_KOW"/>
</dbReference>
<dbReference type="InterPro" id="IPR008991">
    <property type="entry name" value="Translation_prot_SH3-like_sf"/>
</dbReference>
<dbReference type="NCBIfam" id="TIGR01079">
    <property type="entry name" value="rplX_bact"/>
    <property type="match status" value="1"/>
</dbReference>
<dbReference type="PANTHER" id="PTHR12903">
    <property type="entry name" value="MITOCHONDRIAL RIBOSOMAL PROTEIN L24"/>
    <property type="match status" value="1"/>
</dbReference>
<dbReference type="Pfam" id="PF00467">
    <property type="entry name" value="KOW"/>
    <property type="match status" value="1"/>
</dbReference>
<dbReference type="Pfam" id="PF17136">
    <property type="entry name" value="ribosomal_L24"/>
    <property type="match status" value="1"/>
</dbReference>
<dbReference type="SMART" id="SM00739">
    <property type="entry name" value="KOW"/>
    <property type="match status" value="1"/>
</dbReference>
<dbReference type="SUPFAM" id="SSF50104">
    <property type="entry name" value="Translation proteins SH3-like domain"/>
    <property type="match status" value="1"/>
</dbReference>
<dbReference type="PROSITE" id="PS01108">
    <property type="entry name" value="RIBOSOMAL_L24"/>
    <property type="match status" value="1"/>
</dbReference>
<gene>
    <name evidence="1" type="primary">rplX</name>
    <name type="ordered locus">DehaBAV1_0462</name>
</gene>
<keyword id="KW-0687">Ribonucleoprotein</keyword>
<keyword id="KW-0689">Ribosomal protein</keyword>
<keyword id="KW-0694">RNA-binding</keyword>
<keyword id="KW-0699">rRNA-binding</keyword>
<feature type="chain" id="PRO_1000086477" description="Large ribosomal subunit protein uL24">
    <location>
        <begin position="1"/>
        <end position="103"/>
    </location>
</feature>
<evidence type="ECO:0000255" key="1">
    <source>
        <dbReference type="HAMAP-Rule" id="MF_01326"/>
    </source>
</evidence>
<evidence type="ECO:0000305" key="2"/>